<sequence>MNIAKIVREAREQSRLTTLDFATGIFDEFIQLHGDRSFRDDGAVVGGIGWLGDQAVTVVGIQKGKSLQDNLKRNFGQPHPEGYRKALRLMKQAEKFGRPVVTFINTAGAYPGVGAEERGQGEAIARNLMEMSDLKVPIIAIIIGEGGSGGALALAVADRVWMLENSIYAILSPEGFASILWKDGTRAMEAAELMKITSHELLEMDVVDKVISEVGLSSKELIKSVKKELQTELARLSQKPLEELLEERYQRFRKY</sequence>
<name>ACCA_STRP7</name>
<keyword id="KW-0067">ATP-binding</keyword>
<keyword id="KW-0963">Cytoplasm</keyword>
<keyword id="KW-0275">Fatty acid biosynthesis</keyword>
<keyword id="KW-0276">Fatty acid metabolism</keyword>
<keyword id="KW-0444">Lipid biosynthesis</keyword>
<keyword id="KW-0443">Lipid metabolism</keyword>
<keyword id="KW-0547">Nucleotide-binding</keyword>
<keyword id="KW-0808">Transferase</keyword>
<comment type="function">
    <text evidence="1">Component of the acetyl coenzyme A carboxylase (ACC) complex. First, biotin carboxylase catalyzes the carboxylation of biotin on its carrier protein (BCCP) and then the CO(2) group is transferred by the carboxyltransferase to acetyl-CoA to form malonyl-CoA.</text>
</comment>
<comment type="catalytic activity">
    <reaction evidence="1">
        <text>N(6)-carboxybiotinyl-L-lysyl-[protein] + acetyl-CoA = N(6)-biotinyl-L-lysyl-[protein] + malonyl-CoA</text>
        <dbReference type="Rhea" id="RHEA:54728"/>
        <dbReference type="Rhea" id="RHEA-COMP:10505"/>
        <dbReference type="Rhea" id="RHEA-COMP:10506"/>
        <dbReference type="ChEBI" id="CHEBI:57288"/>
        <dbReference type="ChEBI" id="CHEBI:57384"/>
        <dbReference type="ChEBI" id="CHEBI:83144"/>
        <dbReference type="ChEBI" id="CHEBI:83145"/>
        <dbReference type="EC" id="2.1.3.15"/>
    </reaction>
</comment>
<comment type="pathway">
    <text evidence="1">Lipid metabolism; malonyl-CoA biosynthesis; malonyl-CoA from acetyl-CoA: step 1/1.</text>
</comment>
<comment type="subunit">
    <text evidence="1">Acetyl-CoA carboxylase is a heterohexamer composed of biotin carboxyl carrier protein (AccB), biotin carboxylase (AccC) and two subunits each of ACCase subunit alpha (AccA) and ACCase subunit beta (AccD).</text>
</comment>
<comment type="subcellular location">
    <subcellularLocation>
        <location evidence="1">Cytoplasm</location>
    </subcellularLocation>
</comment>
<comment type="similarity">
    <text evidence="1">Belongs to the AccA family.</text>
</comment>
<organism>
    <name type="scientific">Streptococcus pneumoniae (strain 70585)</name>
    <dbReference type="NCBI Taxonomy" id="488221"/>
    <lineage>
        <taxon>Bacteria</taxon>
        <taxon>Bacillati</taxon>
        <taxon>Bacillota</taxon>
        <taxon>Bacilli</taxon>
        <taxon>Lactobacillales</taxon>
        <taxon>Streptococcaceae</taxon>
        <taxon>Streptococcus</taxon>
    </lineage>
</organism>
<protein>
    <recommendedName>
        <fullName evidence="1">Acetyl-coenzyme A carboxylase carboxyl transferase subunit alpha</fullName>
        <shortName evidence="1">ACCase subunit alpha</shortName>
        <shortName evidence="1">Acetyl-CoA carboxylase carboxyltransferase subunit alpha</shortName>
        <ecNumber evidence="1">2.1.3.15</ecNumber>
    </recommendedName>
</protein>
<feature type="chain" id="PRO_1000148751" description="Acetyl-coenzyme A carboxylase carboxyl transferase subunit alpha">
    <location>
        <begin position="1"/>
        <end position="255"/>
    </location>
</feature>
<feature type="domain" description="CoA carboxyltransferase C-terminal" evidence="2">
    <location>
        <begin position="1"/>
        <end position="235"/>
    </location>
</feature>
<evidence type="ECO:0000255" key="1">
    <source>
        <dbReference type="HAMAP-Rule" id="MF_00823"/>
    </source>
</evidence>
<evidence type="ECO:0000255" key="2">
    <source>
        <dbReference type="PROSITE-ProRule" id="PRU01137"/>
    </source>
</evidence>
<dbReference type="EC" id="2.1.3.15" evidence="1"/>
<dbReference type="EMBL" id="CP000918">
    <property type="protein sequence ID" value="ACO17172.1"/>
    <property type="molecule type" value="Genomic_DNA"/>
</dbReference>
<dbReference type="RefSeq" id="WP_001017399.1">
    <property type="nucleotide sequence ID" value="NC_012468.1"/>
</dbReference>
<dbReference type="SMR" id="C1C5G4"/>
<dbReference type="KEGG" id="snm:SP70585_0498"/>
<dbReference type="HOGENOM" id="CLU_015486_0_2_9"/>
<dbReference type="UniPathway" id="UPA00655">
    <property type="reaction ID" value="UER00711"/>
</dbReference>
<dbReference type="Proteomes" id="UP000002211">
    <property type="component" value="Chromosome"/>
</dbReference>
<dbReference type="GO" id="GO:0009317">
    <property type="term" value="C:acetyl-CoA carboxylase complex"/>
    <property type="evidence" value="ECO:0007669"/>
    <property type="project" value="InterPro"/>
</dbReference>
<dbReference type="GO" id="GO:0003989">
    <property type="term" value="F:acetyl-CoA carboxylase activity"/>
    <property type="evidence" value="ECO:0007669"/>
    <property type="project" value="InterPro"/>
</dbReference>
<dbReference type="GO" id="GO:0005524">
    <property type="term" value="F:ATP binding"/>
    <property type="evidence" value="ECO:0007669"/>
    <property type="project" value="UniProtKB-KW"/>
</dbReference>
<dbReference type="GO" id="GO:0016743">
    <property type="term" value="F:carboxyl- or carbamoyltransferase activity"/>
    <property type="evidence" value="ECO:0007669"/>
    <property type="project" value="UniProtKB-UniRule"/>
</dbReference>
<dbReference type="GO" id="GO:0006633">
    <property type="term" value="P:fatty acid biosynthetic process"/>
    <property type="evidence" value="ECO:0007669"/>
    <property type="project" value="UniProtKB-KW"/>
</dbReference>
<dbReference type="GO" id="GO:2001295">
    <property type="term" value="P:malonyl-CoA biosynthetic process"/>
    <property type="evidence" value="ECO:0007669"/>
    <property type="project" value="UniProtKB-UniRule"/>
</dbReference>
<dbReference type="Gene3D" id="3.90.226.10">
    <property type="entry name" value="2-enoyl-CoA Hydratase, Chain A, domain 1"/>
    <property type="match status" value="1"/>
</dbReference>
<dbReference type="HAMAP" id="MF_00823">
    <property type="entry name" value="AcetylCoA_CT_alpha"/>
    <property type="match status" value="1"/>
</dbReference>
<dbReference type="InterPro" id="IPR001095">
    <property type="entry name" value="Acetyl_CoA_COase_a_su"/>
</dbReference>
<dbReference type="InterPro" id="IPR029045">
    <property type="entry name" value="ClpP/crotonase-like_dom_sf"/>
</dbReference>
<dbReference type="InterPro" id="IPR011763">
    <property type="entry name" value="COA_CT_C"/>
</dbReference>
<dbReference type="NCBIfam" id="TIGR00513">
    <property type="entry name" value="accA"/>
    <property type="match status" value="1"/>
</dbReference>
<dbReference type="NCBIfam" id="NF041504">
    <property type="entry name" value="AccA_sub"/>
    <property type="match status" value="1"/>
</dbReference>
<dbReference type="NCBIfam" id="NF004344">
    <property type="entry name" value="PRK05724.1"/>
    <property type="match status" value="1"/>
</dbReference>
<dbReference type="NCBIfam" id="NF008971">
    <property type="entry name" value="PRK12319.1"/>
    <property type="match status" value="1"/>
</dbReference>
<dbReference type="PANTHER" id="PTHR42853">
    <property type="entry name" value="ACETYL-COENZYME A CARBOXYLASE CARBOXYL TRANSFERASE SUBUNIT ALPHA"/>
    <property type="match status" value="1"/>
</dbReference>
<dbReference type="PANTHER" id="PTHR42853:SF3">
    <property type="entry name" value="ACETYL-COENZYME A CARBOXYLASE CARBOXYL TRANSFERASE SUBUNIT ALPHA, CHLOROPLASTIC"/>
    <property type="match status" value="1"/>
</dbReference>
<dbReference type="Pfam" id="PF03255">
    <property type="entry name" value="ACCA"/>
    <property type="match status" value="1"/>
</dbReference>
<dbReference type="PRINTS" id="PR01069">
    <property type="entry name" value="ACCCTRFRASEA"/>
</dbReference>
<dbReference type="SUPFAM" id="SSF52096">
    <property type="entry name" value="ClpP/crotonase"/>
    <property type="match status" value="1"/>
</dbReference>
<dbReference type="PROSITE" id="PS50989">
    <property type="entry name" value="COA_CT_CTER"/>
    <property type="match status" value="1"/>
</dbReference>
<proteinExistence type="inferred from homology"/>
<gene>
    <name evidence="1" type="primary">accA</name>
    <name type="ordered locus">SP70585_0498</name>
</gene>
<accession>C1C5G4</accession>
<reference key="1">
    <citation type="journal article" date="2010" name="Genome Biol.">
        <title>Structure and dynamics of the pan-genome of Streptococcus pneumoniae and closely related species.</title>
        <authorList>
            <person name="Donati C."/>
            <person name="Hiller N.L."/>
            <person name="Tettelin H."/>
            <person name="Muzzi A."/>
            <person name="Croucher N.J."/>
            <person name="Angiuoli S.V."/>
            <person name="Oggioni M."/>
            <person name="Dunning Hotopp J.C."/>
            <person name="Hu F.Z."/>
            <person name="Riley D.R."/>
            <person name="Covacci A."/>
            <person name="Mitchell T.J."/>
            <person name="Bentley S.D."/>
            <person name="Kilian M."/>
            <person name="Ehrlich G.D."/>
            <person name="Rappuoli R."/>
            <person name="Moxon E.R."/>
            <person name="Masignani V."/>
        </authorList>
    </citation>
    <scope>NUCLEOTIDE SEQUENCE [LARGE SCALE GENOMIC DNA]</scope>
    <source>
        <strain>70585</strain>
    </source>
</reference>